<organism>
    <name type="scientific">Aspergillus fumigatus (strain ATCC MYA-4609 / CBS 101355 / FGSC A1100 / Af293)</name>
    <name type="common">Neosartorya fumigata</name>
    <dbReference type="NCBI Taxonomy" id="330879"/>
    <lineage>
        <taxon>Eukaryota</taxon>
        <taxon>Fungi</taxon>
        <taxon>Dikarya</taxon>
        <taxon>Ascomycota</taxon>
        <taxon>Pezizomycotina</taxon>
        <taxon>Eurotiomycetes</taxon>
        <taxon>Eurotiomycetidae</taxon>
        <taxon>Eurotiales</taxon>
        <taxon>Aspergillaceae</taxon>
        <taxon>Aspergillus</taxon>
        <taxon>Aspergillus subgen. Fumigati</taxon>
    </lineage>
</organism>
<protein>
    <recommendedName>
        <fullName evidence="6">Phenol 2-monooxygenase fsqG</fullName>
        <ecNumber evidence="9">1.14.13.-</ecNumber>
    </recommendedName>
    <alternativeName>
        <fullName evidence="5">Fumipyrrole biosynthesis protein F</fullName>
    </alternativeName>
    <alternativeName>
        <fullName evidence="6">Fumisoquins biosynthesis protein G</fullName>
    </alternativeName>
</protein>
<proteinExistence type="evidence at transcript level"/>
<gene>
    <name evidence="6" type="primary">fsqG</name>
    <name evidence="5" type="synonym">fmpF</name>
    <name type="ORF">AFUA_6G03490</name>
</gene>
<name>FSQG_ASPFU</name>
<comment type="function">
    <text evidence="2 3 4 9">Phenol 2-monooxygenase; part of the gene cluster that mediates the biosynthesis of the isoquinoline alkaloids fumisoquin A, fumisoquin B and fumisoquin C; as well as small amounts of fumipyrrole as a shunt metabolite (PubMed:25582336, PubMed:27065235). The products of the cluster lead to a brown coloration and are important for growth and conidiation (PubMed:25582336). The nonribosomal peptide synthetase-like protein fsqF, which lacks a canonical condensation domain, is required for addition of a serine-derived dehydroalanine moiety to activated tyrosine but is not essential for the subsequent steps leading to isoquinoline formation (PubMed:27065235). A different enzyme, most likely the ATP-grasp enzyme fsqD, is responsible for activation of tyrosine (Probable). Three additional enzymes encoded by the fsq cluster, the N-methyltransferase fsqC, the phenol 2-monooxygenase fsqG and the FAD-dependent oxidase fsqB, catalyze the formation of the isoquinoline ring system in the fumisoquins (PubMed:27065235, PubMed:30194285). FsqB converts the fspF thiolation domain-bound (2S,4S,5S)-2-amino-6-(3,4-dihydroxyphenyl)-4-hydroxy-5-(methylamino)hexanoyl into isoquinoline (PubMed:27065235, PubMed:30194285). The cyclization most likely proceeds via a two-step mechanism, beginning with FAD-dependent oxidation of the methyl group to an iminium species followed by electrophilic attack on the deprotonated phenol (Probable).</text>
</comment>
<comment type="cofactor">
    <cofactor evidence="1">
        <name>FAD</name>
        <dbReference type="ChEBI" id="CHEBI:57692"/>
    </cofactor>
</comment>
<comment type="pathway">
    <text evidence="8">Secondary metabolite biosynthesis.</text>
</comment>
<comment type="subunit">
    <text evidence="1">Homodimer.</text>
</comment>
<comment type="induction">
    <text evidence="2 3">Expression is positively regulated by the fumisoquins biosynthesis specific transcription factor fsqA (PubMed:25582336).</text>
</comment>
<comment type="disruption phenotype">
    <text evidence="3">Leads to complete abolishment of isoquinoline alkaloid production but accumulates a series of benzyl pyrroles, including fumipyrrole.</text>
</comment>
<comment type="similarity">
    <text evidence="7">Belongs to the PheA/TfdB FAD monooxygenase family.</text>
</comment>
<accession>Q4WD48</accession>
<dbReference type="EC" id="1.14.13.-" evidence="9"/>
<dbReference type="EMBL" id="AAHF01000012">
    <property type="protein sequence ID" value="EAL85690.1"/>
    <property type="molecule type" value="Genomic_DNA"/>
</dbReference>
<dbReference type="RefSeq" id="XP_747728.1">
    <property type="nucleotide sequence ID" value="XM_742635.1"/>
</dbReference>
<dbReference type="SMR" id="Q4WD48"/>
<dbReference type="STRING" id="330879.Q4WD48"/>
<dbReference type="EnsemblFungi" id="EAL85690">
    <property type="protein sequence ID" value="EAL85690"/>
    <property type="gene ID" value="AFUA_6G03490"/>
</dbReference>
<dbReference type="GeneID" id="3505023"/>
<dbReference type="KEGG" id="afm:AFUA_6G03490"/>
<dbReference type="eggNOG" id="KOG3855">
    <property type="taxonomic scope" value="Eukaryota"/>
</dbReference>
<dbReference type="HOGENOM" id="CLU_009665_9_2_1"/>
<dbReference type="InParanoid" id="Q4WD48"/>
<dbReference type="OMA" id="NIGWKLR"/>
<dbReference type="OrthoDB" id="1716816at2759"/>
<dbReference type="Proteomes" id="UP000002530">
    <property type="component" value="Chromosome 6"/>
</dbReference>
<dbReference type="GO" id="GO:0071949">
    <property type="term" value="F:FAD binding"/>
    <property type="evidence" value="ECO:0007669"/>
    <property type="project" value="InterPro"/>
</dbReference>
<dbReference type="GO" id="GO:0016491">
    <property type="term" value="F:oxidoreductase activity"/>
    <property type="evidence" value="ECO:0000318"/>
    <property type="project" value="GO_Central"/>
</dbReference>
<dbReference type="GO" id="GO:0016709">
    <property type="term" value="F:oxidoreductase activity, acting on paired donors, with incorporation or reduction of molecular oxygen, NAD(P)H as one donor, and incorporation of one atom of oxygen"/>
    <property type="evidence" value="ECO:0007669"/>
    <property type="project" value="UniProtKB-ARBA"/>
</dbReference>
<dbReference type="CDD" id="cd02979">
    <property type="entry name" value="PHOX_C"/>
    <property type="match status" value="1"/>
</dbReference>
<dbReference type="Gene3D" id="3.40.30.20">
    <property type="match status" value="1"/>
</dbReference>
<dbReference type="Gene3D" id="3.30.9.10">
    <property type="entry name" value="D-Amino Acid Oxidase, subunit A, domain 2"/>
    <property type="match status" value="1"/>
</dbReference>
<dbReference type="Gene3D" id="3.50.50.60">
    <property type="entry name" value="FAD/NAD(P)-binding domain"/>
    <property type="match status" value="1"/>
</dbReference>
<dbReference type="InterPro" id="IPR002938">
    <property type="entry name" value="FAD-bd"/>
</dbReference>
<dbReference type="InterPro" id="IPR036188">
    <property type="entry name" value="FAD/NAD-bd_sf"/>
</dbReference>
<dbReference type="InterPro" id="IPR012941">
    <property type="entry name" value="Phe_hydrox_C_dim_dom"/>
</dbReference>
<dbReference type="InterPro" id="IPR038220">
    <property type="entry name" value="PHOX_C_sf"/>
</dbReference>
<dbReference type="InterPro" id="IPR050641">
    <property type="entry name" value="RIFMO-like"/>
</dbReference>
<dbReference type="InterPro" id="IPR036249">
    <property type="entry name" value="Thioredoxin-like_sf"/>
</dbReference>
<dbReference type="PANTHER" id="PTHR43004:SF16">
    <property type="entry name" value="PHENOL 2-MONOOXYGENASE FSQG"/>
    <property type="match status" value="1"/>
</dbReference>
<dbReference type="PANTHER" id="PTHR43004">
    <property type="entry name" value="TRK SYSTEM POTASSIUM UPTAKE PROTEIN"/>
    <property type="match status" value="1"/>
</dbReference>
<dbReference type="Pfam" id="PF01494">
    <property type="entry name" value="FAD_binding_3"/>
    <property type="match status" value="1"/>
</dbReference>
<dbReference type="Pfam" id="PF07976">
    <property type="entry name" value="Phe_hydrox_dim"/>
    <property type="match status" value="1"/>
</dbReference>
<dbReference type="PRINTS" id="PR00420">
    <property type="entry name" value="RNGMNOXGNASE"/>
</dbReference>
<dbReference type="SUPFAM" id="SSF54373">
    <property type="entry name" value="FAD-linked reductases, C-terminal domain"/>
    <property type="match status" value="1"/>
</dbReference>
<dbReference type="SUPFAM" id="SSF51905">
    <property type="entry name" value="FAD/NAD(P)-binding domain"/>
    <property type="match status" value="1"/>
</dbReference>
<dbReference type="SUPFAM" id="SSF52833">
    <property type="entry name" value="Thioredoxin-like"/>
    <property type="match status" value="1"/>
</dbReference>
<evidence type="ECO:0000250" key="1">
    <source>
        <dbReference type="UniProtKB" id="P15245"/>
    </source>
</evidence>
<evidence type="ECO:0000269" key="2">
    <source>
    </source>
</evidence>
<evidence type="ECO:0000269" key="3">
    <source>
    </source>
</evidence>
<evidence type="ECO:0000269" key="4">
    <source>
    </source>
</evidence>
<evidence type="ECO:0000303" key="5">
    <source>
    </source>
</evidence>
<evidence type="ECO:0000303" key="6">
    <source>
    </source>
</evidence>
<evidence type="ECO:0000305" key="7"/>
<evidence type="ECO:0000305" key="8">
    <source>
    </source>
</evidence>
<evidence type="ECO:0000305" key="9">
    <source>
    </source>
</evidence>
<keyword id="KW-0274">FAD</keyword>
<keyword id="KW-0285">Flavoprotein</keyword>
<keyword id="KW-0503">Monooxygenase</keyword>
<keyword id="KW-0560">Oxidoreductase</keyword>
<keyword id="KW-1185">Reference proteome</keyword>
<reference key="1">
    <citation type="journal article" date="2005" name="Nature">
        <title>Genomic sequence of the pathogenic and allergenic filamentous fungus Aspergillus fumigatus.</title>
        <authorList>
            <person name="Nierman W.C."/>
            <person name="Pain A."/>
            <person name="Anderson M.J."/>
            <person name="Wortman J.R."/>
            <person name="Kim H.S."/>
            <person name="Arroyo J."/>
            <person name="Berriman M."/>
            <person name="Abe K."/>
            <person name="Archer D.B."/>
            <person name="Bermejo C."/>
            <person name="Bennett J.W."/>
            <person name="Bowyer P."/>
            <person name="Chen D."/>
            <person name="Collins M."/>
            <person name="Coulsen R."/>
            <person name="Davies R."/>
            <person name="Dyer P.S."/>
            <person name="Farman M.L."/>
            <person name="Fedorova N."/>
            <person name="Fedorova N.D."/>
            <person name="Feldblyum T.V."/>
            <person name="Fischer R."/>
            <person name="Fosker N."/>
            <person name="Fraser A."/>
            <person name="Garcia J.L."/>
            <person name="Garcia M.J."/>
            <person name="Goble A."/>
            <person name="Goldman G.H."/>
            <person name="Gomi K."/>
            <person name="Griffith-Jones S."/>
            <person name="Gwilliam R."/>
            <person name="Haas B.J."/>
            <person name="Haas H."/>
            <person name="Harris D.E."/>
            <person name="Horiuchi H."/>
            <person name="Huang J."/>
            <person name="Humphray S."/>
            <person name="Jimenez J."/>
            <person name="Keller N."/>
            <person name="Khouri H."/>
            <person name="Kitamoto K."/>
            <person name="Kobayashi T."/>
            <person name="Konzack S."/>
            <person name="Kulkarni R."/>
            <person name="Kumagai T."/>
            <person name="Lafton A."/>
            <person name="Latge J.-P."/>
            <person name="Li W."/>
            <person name="Lord A."/>
            <person name="Lu C."/>
            <person name="Majoros W.H."/>
            <person name="May G.S."/>
            <person name="Miller B.L."/>
            <person name="Mohamoud Y."/>
            <person name="Molina M."/>
            <person name="Monod M."/>
            <person name="Mouyna I."/>
            <person name="Mulligan S."/>
            <person name="Murphy L.D."/>
            <person name="O'Neil S."/>
            <person name="Paulsen I."/>
            <person name="Penalva M.A."/>
            <person name="Pertea M."/>
            <person name="Price C."/>
            <person name="Pritchard B.L."/>
            <person name="Quail M.A."/>
            <person name="Rabbinowitsch E."/>
            <person name="Rawlins N."/>
            <person name="Rajandream M.A."/>
            <person name="Reichard U."/>
            <person name="Renauld H."/>
            <person name="Robson G.D."/>
            <person name="Rodriguez de Cordoba S."/>
            <person name="Rodriguez-Pena J.M."/>
            <person name="Ronning C.M."/>
            <person name="Rutter S."/>
            <person name="Salzberg S.L."/>
            <person name="Sanchez M."/>
            <person name="Sanchez-Ferrero J.C."/>
            <person name="Saunders D."/>
            <person name="Seeger K."/>
            <person name="Squares R."/>
            <person name="Squares S."/>
            <person name="Takeuchi M."/>
            <person name="Tekaia F."/>
            <person name="Turner G."/>
            <person name="Vazquez de Aldana C.R."/>
            <person name="Weidman J."/>
            <person name="White O."/>
            <person name="Woodward J.R."/>
            <person name="Yu J.-H."/>
            <person name="Fraser C.M."/>
            <person name="Galagan J.E."/>
            <person name="Asai K."/>
            <person name="Machida M."/>
            <person name="Hall N."/>
            <person name="Barrell B.G."/>
            <person name="Denning D.W."/>
        </authorList>
    </citation>
    <scope>NUCLEOTIDE SEQUENCE [LARGE SCALE GENOMIC DNA]</scope>
    <source>
        <strain>ATCC MYA-4609 / CBS 101355 / FGSC A1100 / Af293</strain>
    </source>
</reference>
<reference key="2">
    <citation type="journal article" date="2015" name="Mol. Microbiol.">
        <title>Transcriptome analysis of cyclic AMP-dependent protein kinase A-regulated genes reveals the production of the novel natural compound fumipyrrole by Aspergillus fumigatus.</title>
        <authorList>
            <person name="Macheleidt J."/>
            <person name="Scherlach K."/>
            <person name="Neuwirth T."/>
            <person name="Schmidt-Heck W."/>
            <person name="Strassburger M."/>
            <person name="Spraker J."/>
            <person name="Baccile J.A."/>
            <person name="Schroeder F.C."/>
            <person name="Keller N.P."/>
            <person name="Hertweck C."/>
            <person name="Heinekamp T."/>
            <person name="Brakhage A.A."/>
        </authorList>
    </citation>
    <scope>FUNCTION</scope>
    <scope>INDUCTION</scope>
</reference>
<reference key="3">
    <citation type="journal article" date="2016" name="Nat. Chem. Biol.">
        <title>Plant-like biosynthesis of isoquinoline alkaloids in Aspergillus fumigatus.</title>
        <authorList>
            <person name="Baccile J.A."/>
            <person name="Spraker J.E."/>
            <person name="Le H.H."/>
            <person name="Brandenburger E."/>
            <person name="Gomez C."/>
            <person name="Bok J.W."/>
            <person name="Macheleidt J."/>
            <person name="Brakhage A.A."/>
            <person name="Hoffmeister D."/>
            <person name="Keller N.P."/>
            <person name="Schroeder F.C."/>
        </authorList>
    </citation>
    <scope>FUNCTION</scope>
    <scope>DISRUPTION PHENOTYPE</scope>
</reference>
<reference key="4">
    <citation type="journal article" date="2018" name="J. Biol. Chem.">
        <title>Oxidative cyclization of N-methyl-dopa by a fungal flavoenzyme of the amine oxidase family.</title>
        <authorList>
            <person name="Lahham M."/>
            <person name="Pavkov-Keller T."/>
            <person name="Fuchs M."/>
            <person name="Niederhauser J."/>
            <person name="Chalhoub G."/>
            <person name="Daniel B."/>
            <person name="Kroutil W."/>
            <person name="Gruber K."/>
            <person name="Macheroux P."/>
        </authorList>
    </citation>
    <scope>FUNCTION</scope>
</reference>
<feature type="chain" id="PRO_0000438874" description="Phenol 2-monooxygenase fsqG">
    <location>
        <begin position="1"/>
        <end position="588"/>
    </location>
</feature>
<feature type="binding site" evidence="1">
    <location>
        <begin position="9"/>
        <end position="38"/>
    </location>
    <ligand>
        <name>FAD</name>
        <dbReference type="ChEBI" id="CHEBI:57692"/>
    </ligand>
</feature>
<feature type="binding site" evidence="1">
    <location>
        <begin position="17"/>
        <end position="18"/>
    </location>
    <ligand>
        <name>FAD</name>
        <dbReference type="ChEBI" id="CHEBI:57692"/>
    </ligand>
</feature>
<feature type="binding site" evidence="1">
    <location>
        <begin position="37"/>
        <end position="39"/>
    </location>
    <ligand>
        <name>FAD</name>
        <dbReference type="ChEBI" id="CHEBI:57692"/>
    </ligand>
</feature>
<feature type="binding site" evidence="1">
    <location>
        <begin position="45"/>
        <end position="50"/>
    </location>
    <ligand>
        <name>FAD</name>
        <dbReference type="ChEBI" id="CHEBI:57692"/>
    </ligand>
</feature>
<feature type="binding site" evidence="1">
    <location>
        <position position="49"/>
    </location>
    <ligand>
        <name>substrate</name>
    </ligand>
</feature>
<feature type="binding site" evidence="1">
    <location>
        <position position="232"/>
    </location>
    <ligand>
        <name>FAD</name>
        <dbReference type="ChEBI" id="CHEBI:57692"/>
    </ligand>
</feature>
<feature type="binding site" evidence="1">
    <location>
        <position position="232"/>
    </location>
    <ligand>
        <name>substrate</name>
    </ligand>
</feature>
<feature type="binding site" evidence="1">
    <location>
        <begin position="289"/>
        <end position="299"/>
    </location>
    <ligand>
        <name>FAD</name>
        <dbReference type="ChEBI" id="CHEBI:57692"/>
    </ligand>
</feature>
<feature type="binding site" evidence="1">
    <location>
        <position position="299"/>
    </location>
    <ligand>
        <name>FAD</name>
        <dbReference type="ChEBI" id="CHEBI:57692"/>
    </ligand>
</feature>
<feature type="binding site" evidence="1">
    <location>
        <begin position="309"/>
        <end position="313"/>
    </location>
    <ligand>
        <name>FAD</name>
        <dbReference type="ChEBI" id="CHEBI:57692"/>
    </ligand>
</feature>
<sequence length="588" mass="65844">MSNASDHVDVLIIGAGPAGLTTANSFNGSNCRVRLIDWKPAPLETGRADGLKSISLEVLDSFGIGDRVLNDCQPCEEIVLWNPGKDGVIARTMTIPDKVEELGQIERVMVENLYRHKTVQVNWNTQPVRLHIAPVTKDEPEAHPLTITVQNKETLGQETIRAKYVVGADGAHSWLRKYLNIGFSGDVTDSTWGVMNLVPKTDFPDIRKVFVVHSRAGTVMGVPREDKLVRLYISMDGGNRHTSIDAKSITAENLLQAARAILAPYRLDAARIPWWSAYCVGQRVADEFARHNRIFLAGDAVHTHSPKAGQGMNTSIQDGYNIGWKLRYCLEQKASPALLSTYQTERRPIAQALIDFDRKYLESFTRRDITHQEFLEAYLAGQRFTTGIQIQYPPSLIVTAKHLHAPSHPLATNLAPGKRLPDFQMVNQSDAVPIQAYHRFTSDGRFRLLVFPGDISQALAFGRFSRLGDWLTSHLPPSSGLEIITIHGARRADVELMDLHPAFRPWSDEEGWNYWTVYADDDSYHKGHGHVYERCGISKEDGVLVLLRPDGYISLIASFDETHELIDFFDGLQSGPRTVPQPERRANL</sequence>